<protein>
    <recommendedName>
        <fullName evidence="1">tRNA dimethylallyltransferase</fullName>
        <ecNumber evidence="1">2.5.1.75</ecNumber>
    </recommendedName>
    <alternativeName>
        <fullName evidence="1">Dimethylallyl diphosphate:tRNA dimethylallyltransferase</fullName>
        <shortName evidence="1">DMAPP:tRNA dimethylallyltransferase</shortName>
        <shortName evidence="1">DMATase</shortName>
    </alternativeName>
    <alternativeName>
        <fullName evidence="1">Isopentenyl-diphosphate:tRNA isopentenyltransferase</fullName>
        <shortName evidence="1">IPP transferase</shortName>
        <shortName evidence="1">IPPT</shortName>
        <shortName evidence="1">IPTase</shortName>
    </alternativeName>
</protein>
<organism>
    <name type="scientific">Mycolicibacterium gilvum (strain PYR-GCK)</name>
    <name type="common">Mycobacterium gilvum (strain PYR-GCK)</name>
    <dbReference type="NCBI Taxonomy" id="350054"/>
    <lineage>
        <taxon>Bacteria</taxon>
        <taxon>Bacillati</taxon>
        <taxon>Actinomycetota</taxon>
        <taxon>Actinomycetes</taxon>
        <taxon>Mycobacteriales</taxon>
        <taxon>Mycobacteriaceae</taxon>
        <taxon>Mycolicibacterium</taxon>
    </lineage>
</organism>
<comment type="function">
    <text evidence="1">Catalyzes the transfer of a dimethylallyl group onto the adenine at position 37 in tRNAs that read codons beginning with uridine, leading to the formation of N6-(dimethylallyl)adenosine (i(6)A).</text>
</comment>
<comment type="catalytic activity">
    <reaction evidence="1">
        <text>adenosine(37) in tRNA + dimethylallyl diphosphate = N(6)-dimethylallyladenosine(37) in tRNA + diphosphate</text>
        <dbReference type="Rhea" id="RHEA:26482"/>
        <dbReference type="Rhea" id="RHEA-COMP:10162"/>
        <dbReference type="Rhea" id="RHEA-COMP:10375"/>
        <dbReference type="ChEBI" id="CHEBI:33019"/>
        <dbReference type="ChEBI" id="CHEBI:57623"/>
        <dbReference type="ChEBI" id="CHEBI:74411"/>
        <dbReference type="ChEBI" id="CHEBI:74415"/>
        <dbReference type="EC" id="2.5.1.75"/>
    </reaction>
</comment>
<comment type="cofactor">
    <cofactor evidence="1">
        <name>Mg(2+)</name>
        <dbReference type="ChEBI" id="CHEBI:18420"/>
    </cofactor>
</comment>
<comment type="subunit">
    <text evidence="1">Monomer.</text>
</comment>
<comment type="similarity">
    <text evidence="1">Belongs to the IPP transferase family.</text>
</comment>
<proteinExistence type="inferred from homology"/>
<sequence length="313" mass="33850">MRPLAVVGPTGTGKSDLALGIAEALSGEIAVEVVNADAMQLYRGMDIGTAKLTVDERRGVPHHQLDVLEVTETATVARYQQAAAADVDAIAARGALPVIVGGSMLYVQSLLDEWSFPATDPQVRARWETRLAEVGVAALHRELAAVDAAAAASILPTDGRRIVRALEVVELTGRPFAASAPTIGAPRWNTAIVGLDWETTVLDERLRRRTDTMFERGLVEEVRGLIGRGLRDGVTAARALGYAQVLADLDAGGDGEAAREPTFVGTRRYVRRQRSWFRRDHRITWLDGAAPGNVDAVLRLWRQRRAGAPRPAD</sequence>
<accession>A4TCN4</accession>
<reference key="1">
    <citation type="submission" date="2007-04" db="EMBL/GenBank/DDBJ databases">
        <title>Complete sequence of chromosome of Mycobacterium gilvum PYR-GCK.</title>
        <authorList>
            <consortium name="US DOE Joint Genome Institute"/>
            <person name="Copeland A."/>
            <person name="Lucas S."/>
            <person name="Lapidus A."/>
            <person name="Barry K."/>
            <person name="Detter J.C."/>
            <person name="Glavina del Rio T."/>
            <person name="Hammon N."/>
            <person name="Israni S."/>
            <person name="Dalin E."/>
            <person name="Tice H."/>
            <person name="Pitluck S."/>
            <person name="Chain P."/>
            <person name="Malfatti S."/>
            <person name="Shin M."/>
            <person name="Vergez L."/>
            <person name="Schmutz J."/>
            <person name="Larimer F."/>
            <person name="Land M."/>
            <person name="Hauser L."/>
            <person name="Kyrpides N."/>
            <person name="Mikhailova N."/>
            <person name="Miller C."/>
            <person name="Richardson P."/>
        </authorList>
    </citation>
    <scope>NUCLEOTIDE SEQUENCE [LARGE SCALE GENOMIC DNA]</scope>
    <source>
        <strain>PYR-GCK</strain>
    </source>
</reference>
<gene>
    <name evidence="1" type="primary">miaA</name>
    <name type="ordered locus">Mflv_3962</name>
</gene>
<name>MIAA_MYCGI</name>
<evidence type="ECO:0000255" key="1">
    <source>
        <dbReference type="HAMAP-Rule" id="MF_00185"/>
    </source>
</evidence>
<feature type="chain" id="PRO_0000377225" description="tRNA dimethylallyltransferase">
    <location>
        <begin position="1"/>
        <end position="313"/>
    </location>
</feature>
<feature type="binding site" evidence="1">
    <location>
        <begin position="8"/>
        <end position="15"/>
    </location>
    <ligand>
        <name>ATP</name>
        <dbReference type="ChEBI" id="CHEBI:30616"/>
    </ligand>
</feature>
<feature type="binding site" evidence="1">
    <location>
        <begin position="10"/>
        <end position="15"/>
    </location>
    <ligand>
        <name>substrate</name>
    </ligand>
</feature>
<feature type="site" description="Interaction with substrate tRNA" evidence="1">
    <location>
        <position position="103"/>
    </location>
</feature>
<feature type="site" description="Interaction with substrate tRNA" evidence="1">
    <location>
        <position position="124"/>
    </location>
</feature>
<keyword id="KW-0067">ATP-binding</keyword>
<keyword id="KW-0460">Magnesium</keyword>
<keyword id="KW-0547">Nucleotide-binding</keyword>
<keyword id="KW-0808">Transferase</keyword>
<keyword id="KW-0819">tRNA processing</keyword>
<dbReference type="EC" id="2.5.1.75" evidence="1"/>
<dbReference type="EMBL" id="CP000656">
    <property type="protein sequence ID" value="ABP46433.1"/>
    <property type="molecule type" value="Genomic_DNA"/>
</dbReference>
<dbReference type="SMR" id="A4TCN4"/>
<dbReference type="STRING" id="350054.Mflv_3962"/>
<dbReference type="KEGG" id="mgi:Mflv_3962"/>
<dbReference type="eggNOG" id="COG0324">
    <property type="taxonomic scope" value="Bacteria"/>
</dbReference>
<dbReference type="HOGENOM" id="CLU_032616_0_1_11"/>
<dbReference type="OrthoDB" id="9776390at2"/>
<dbReference type="GO" id="GO:0005524">
    <property type="term" value="F:ATP binding"/>
    <property type="evidence" value="ECO:0007669"/>
    <property type="project" value="UniProtKB-UniRule"/>
</dbReference>
<dbReference type="GO" id="GO:0052381">
    <property type="term" value="F:tRNA dimethylallyltransferase activity"/>
    <property type="evidence" value="ECO:0007669"/>
    <property type="project" value="UniProtKB-UniRule"/>
</dbReference>
<dbReference type="GO" id="GO:0006400">
    <property type="term" value="P:tRNA modification"/>
    <property type="evidence" value="ECO:0007669"/>
    <property type="project" value="TreeGrafter"/>
</dbReference>
<dbReference type="FunFam" id="1.10.20.140:FF:000001">
    <property type="entry name" value="tRNA dimethylallyltransferase"/>
    <property type="match status" value="1"/>
</dbReference>
<dbReference type="Gene3D" id="1.10.20.140">
    <property type="match status" value="1"/>
</dbReference>
<dbReference type="Gene3D" id="3.40.50.300">
    <property type="entry name" value="P-loop containing nucleotide triphosphate hydrolases"/>
    <property type="match status" value="1"/>
</dbReference>
<dbReference type="HAMAP" id="MF_00185">
    <property type="entry name" value="IPP_trans"/>
    <property type="match status" value="1"/>
</dbReference>
<dbReference type="InterPro" id="IPR039657">
    <property type="entry name" value="Dimethylallyltransferase"/>
</dbReference>
<dbReference type="InterPro" id="IPR018022">
    <property type="entry name" value="IPT"/>
</dbReference>
<dbReference type="InterPro" id="IPR027417">
    <property type="entry name" value="P-loop_NTPase"/>
</dbReference>
<dbReference type="NCBIfam" id="TIGR00174">
    <property type="entry name" value="miaA"/>
    <property type="match status" value="1"/>
</dbReference>
<dbReference type="PANTHER" id="PTHR11088">
    <property type="entry name" value="TRNA DIMETHYLALLYLTRANSFERASE"/>
    <property type="match status" value="1"/>
</dbReference>
<dbReference type="PANTHER" id="PTHR11088:SF60">
    <property type="entry name" value="TRNA DIMETHYLALLYLTRANSFERASE"/>
    <property type="match status" value="1"/>
</dbReference>
<dbReference type="Pfam" id="PF01715">
    <property type="entry name" value="IPPT"/>
    <property type="match status" value="1"/>
</dbReference>
<dbReference type="SUPFAM" id="SSF52540">
    <property type="entry name" value="P-loop containing nucleoside triphosphate hydrolases"/>
    <property type="match status" value="1"/>
</dbReference>